<reference key="1">
    <citation type="submission" date="2006-03" db="EMBL/GenBank/DDBJ databases">
        <title>Complete sequence of chromosome of Psychrobacter cryohalolentis K5.</title>
        <authorList>
            <consortium name="US DOE Joint Genome Institute"/>
            <person name="Copeland A."/>
            <person name="Lucas S."/>
            <person name="Lapidus A."/>
            <person name="Barry K."/>
            <person name="Detter J.C."/>
            <person name="Glavina T."/>
            <person name="Hammon N."/>
            <person name="Israni S."/>
            <person name="Dalin E."/>
            <person name="Tice H."/>
            <person name="Pitluck S."/>
            <person name="Brettin T."/>
            <person name="Bruce D."/>
            <person name="Han C."/>
            <person name="Tapia R."/>
            <person name="Sims D.R."/>
            <person name="Gilna P."/>
            <person name="Schmutz J."/>
            <person name="Larimer F."/>
            <person name="Land M."/>
            <person name="Hauser L."/>
            <person name="Kyrpides N."/>
            <person name="Kim E."/>
            <person name="Richardson P."/>
        </authorList>
    </citation>
    <scope>NUCLEOTIDE SEQUENCE [LARGE SCALE GENOMIC DNA]</scope>
    <source>
        <strain>ATCC BAA-1226 / DSM 17306 / VKM B-2378 / K5</strain>
    </source>
</reference>
<dbReference type="EC" id="3.1.-.-" evidence="1"/>
<dbReference type="EMBL" id="CP000323">
    <property type="protein sequence ID" value="ABE74373.1"/>
    <property type="molecule type" value="Genomic_DNA"/>
</dbReference>
<dbReference type="SMR" id="Q1QD80"/>
<dbReference type="STRING" id="335284.Pcryo_0590"/>
<dbReference type="KEGG" id="pcr:Pcryo_0590"/>
<dbReference type="eggNOG" id="COG0319">
    <property type="taxonomic scope" value="Bacteria"/>
</dbReference>
<dbReference type="HOGENOM" id="CLU_106710_0_2_6"/>
<dbReference type="Proteomes" id="UP000002425">
    <property type="component" value="Chromosome"/>
</dbReference>
<dbReference type="GO" id="GO:0005737">
    <property type="term" value="C:cytoplasm"/>
    <property type="evidence" value="ECO:0007669"/>
    <property type="project" value="UniProtKB-SubCell"/>
</dbReference>
<dbReference type="GO" id="GO:0004222">
    <property type="term" value="F:metalloendopeptidase activity"/>
    <property type="evidence" value="ECO:0007669"/>
    <property type="project" value="InterPro"/>
</dbReference>
<dbReference type="GO" id="GO:0004521">
    <property type="term" value="F:RNA endonuclease activity"/>
    <property type="evidence" value="ECO:0007669"/>
    <property type="project" value="UniProtKB-UniRule"/>
</dbReference>
<dbReference type="GO" id="GO:0008270">
    <property type="term" value="F:zinc ion binding"/>
    <property type="evidence" value="ECO:0007669"/>
    <property type="project" value="UniProtKB-UniRule"/>
</dbReference>
<dbReference type="GO" id="GO:0006364">
    <property type="term" value="P:rRNA processing"/>
    <property type="evidence" value="ECO:0007669"/>
    <property type="project" value="UniProtKB-UniRule"/>
</dbReference>
<dbReference type="Gene3D" id="3.40.390.30">
    <property type="entry name" value="Metalloproteases ('zincins'), catalytic domain"/>
    <property type="match status" value="1"/>
</dbReference>
<dbReference type="HAMAP" id="MF_00009">
    <property type="entry name" value="Endoribonucl_YbeY"/>
    <property type="match status" value="1"/>
</dbReference>
<dbReference type="InterPro" id="IPR023091">
    <property type="entry name" value="MetalPrtase_cat_dom_sf_prd"/>
</dbReference>
<dbReference type="InterPro" id="IPR002036">
    <property type="entry name" value="YbeY"/>
</dbReference>
<dbReference type="InterPro" id="IPR020549">
    <property type="entry name" value="YbeY_CS"/>
</dbReference>
<dbReference type="NCBIfam" id="TIGR00043">
    <property type="entry name" value="rRNA maturation RNase YbeY"/>
    <property type="match status" value="1"/>
</dbReference>
<dbReference type="PANTHER" id="PTHR46986">
    <property type="entry name" value="ENDORIBONUCLEASE YBEY, CHLOROPLASTIC"/>
    <property type="match status" value="1"/>
</dbReference>
<dbReference type="PANTHER" id="PTHR46986:SF1">
    <property type="entry name" value="ENDORIBONUCLEASE YBEY, CHLOROPLASTIC"/>
    <property type="match status" value="1"/>
</dbReference>
<dbReference type="Pfam" id="PF02130">
    <property type="entry name" value="YbeY"/>
    <property type="match status" value="1"/>
</dbReference>
<dbReference type="SUPFAM" id="SSF55486">
    <property type="entry name" value="Metalloproteases ('zincins'), catalytic domain"/>
    <property type="match status" value="1"/>
</dbReference>
<dbReference type="PROSITE" id="PS01306">
    <property type="entry name" value="UPF0054"/>
    <property type="match status" value="1"/>
</dbReference>
<accession>Q1QD80</accession>
<proteinExistence type="inferred from homology"/>
<name>YBEY_PSYCK</name>
<comment type="function">
    <text evidence="1">Single strand-specific metallo-endoribonuclease involved in late-stage 70S ribosome quality control and in maturation of the 3' terminus of the 16S rRNA.</text>
</comment>
<comment type="cofactor">
    <cofactor evidence="1">
        <name>Zn(2+)</name>
        <dbReference type="ChEBI" id="CHEBI:29105"/>
    </cofactor>
    <text evidence="1">Binds 1 zinc ion.</text>
</comment>
<comment type="subcellular location">
    <subcellularLocation>
        <location evidence="1">Cytoplasm</location>
    </subcellularLocation>
</comment>
<comment type="similarity">
    <text evidence="1">Belongs to the endoribonuclease YbeY family.</text>
</comment>
<keyword id="KW-0963">Cytoplasm</keyword>
<keyword id="KW-0255">Endonuclease</keyword>
<keyword id="KW-0378">Hydrolase</keyword>
<keyword id="KW-0479">Metal-binding</keyword>
<keyword id="KW-0540">Nuclease</keyword>
<keyword id="KW-0690">Ribosome biogenesis</keyword>
<keyword id="KW-0698">rRNA processing</keyword>
<keyword id="KW-0862">Zinc</keyword>
<evidence type="ECO:0000255" key="1">
    <source>
        <dbReference type="HAMAP-Rule" id="MF_00009"/>
    </source>
</evidence>
<gene>
    <name evidence="1" type="primary">ybeY</name>
    <name type="ordered locus">Pcryo_0590</name>
</gene>
<organism>
    <name type="scientific">Psychrobacter cryohalolentis (strain ATCC BAA-1226 / DSM 17306 / VKM B-2378 / K5)</name>
    <dbReference type="NCBI Taxonomy" id="335284"/>
    <lineage>
        <taxon>Bacteria</taxon>
        <taxon>Pseudomonadati</taxon>
        <taxon>Pseudomonadota</taxon>
        <taxon>Gammaproteobacteria</taxon>
        <taxon>Moraxellales</taxon>
        <taxon>Moraxellaceae</taxon>
        <taxon>Psychrobacter</taxon>
    </lineage>
</organism>
<feature type="chain" id="PRO_0000284282" description="Endoribonuclease YbeY">
    <location>
        <begin position="1"/>
        <end position="155"/>
    </location>
</feature>
<feature type="binding site" evidence="1">
    <location>
        <position position="117"/>
    </location>
    <ligand>
        <name>Zn(2+)</name>
        <dbReference type="ChEBI" id="CHEBI:29105"/>
        <note>catalytic</note>
    </ligand>
</feature>
<feature type="binding site" evidence="1">
    <location>
        <position position="121"/>
    </location>
    <ligand>
        <name>Zn(2+)</name>
        <dbReference type="ChEBI" id="CHEBI:29105"/>
        <note>catalytic</note>
    </ligand>
</feature>
<feature type="binding site" evidence="1">
    <location>
        <position position="127"/>
    </location>
    <ligand>
        <name>Zn(2+)</name>
        <dbReference type="ChEBI" id="CHEBI:29105"/>
        <note>catalytic</note>
    </ligand>
</feature>
<protein>
    <recommendedName>
        <fullName evidence="1">Endoribonuclease YbeY</fullName>
        <ecNumber evidence="1">3.1.-.-</ecNumber>
    </recommendedName>
</protein>
<sequence length="155" mass="17520">MLSVMAATLNYIDEQVKGGLILPYFEDIDAEQWQEKIKVLDIYITDEVEGRELNLEARQKDYATNILSYPSDLPAAIIGLMPTLPLGELIICHAVMIREAAEQNKEAVQHISHLLIHGVLHLLGFDHELGQAEQDEMERFEIEILAGLNIPNPYN</sequence>